<protein>
    <recommendedName>
        <fullName evidence="1">Soluble pyridine nucleotide transhydrogenase</fullName>
        <shortName evidence="1">STH</shortName>
        <ecNumber evidence="1">1.6.1.1</ecNumber>
    </recommendedName>
    <alternativeName>
        <fullName evidence="1">NAD(P)(+) transhydrogenase [B-specific]</fullName>
    </alternativeName>
</protein>
<reference key="1">
    <citation type="journal article" date="2005" name="Proc. Natl. Acad. Sci. U.S.A.">
        <title>Comparison of the complete genome sequences of Pseudomonas syringae pv. syringae B728a and pv. tomato DC3000.</title>
        <authorList>
            <person name="Feil H."/>
            <person name="Feil W.S."/>
            <person name="Chain P."/>
            <person name="Larimer F."/>
            <person name="Dibartolo G."/>
            <person name="Copeland A."/>
            <person name="Lykidis A."/>
            <person name="Trong S."/>
            <person name="Nolan M."/>
            <person name="Goltsman E."/>
            <person name="Thiel J."/>
            <person name="Malfatti S."/>
            <person name="Loper J.E."/>
            <person name="Lapidus A."/>
            <person name="Detter J.C."/>
            <person name="Land M."/>
            <person name="Richardson P.M."/>
            <person name="Kyrpides N.C."/>
            <person name="Ivanova N."/>
            <person name="Lindow S.E."/>
        </authorList>
    </citation>
    <scope>NUCLEOTIDE SEQUENCE [LARGE SCALE GENOMIC DNA]</scope>
    <source>
        <strain>B728a</strain>
    </source>
</reference>
<gene>
    <name evidence="1" type="primary">sthA</name>
    <name type="ordered locus">Psyr_1901</name>
</gene>
<keyword id="KW-0963">Cytoplasm</keyword>
<keyword id="KW-0274">FAD</keyword>
<keyword id="KW-0285">Flavoprotein</keyword>
<keyword id="KW-0520">NAD</keyword>
<keyword id="KW-0521">NADP</keyword>
<keyword id="KW-0560">Oxidoreductase</keyword>
<organism>
    <name type="scientific">Pseudomonas syringae pv. syringae (strain B728a)</name>
    <dbReference type="NCBI Taxonomy" id="205918"/>
    <lineage>
        <taxon>Bacteria</taxon>
        <taxon>Pseudomonadati</taxon>
        <taxon>Pseudomonadota</taxon>
        <taxon>Gammaproteobacteria</taxon>
        <taxon>Pseudomonadales</taxon>
        <taxon>Pseudomonadaceae</taxon>
        <taxon>Pseudomonas</taxon>
        <taxon>Pseudomonas syringae</taxon>
    </lineage>
</organism>
<proteinExistence type="inferred from homology"/>
<feature type="chain" id="PRO_0000260241" description="Soluble pyridine nucleotide transhydrogenase">
    <location>
        <begin position="1"/>
        <end position="464"/>
    </location>
</feature>
<feature type="binding site" evidence="1">
    <location>
        <begin position="35"/>
        <end position="44"/>
    </location>
    <ligand>
        <name>FAD</name>
        <dbReference type="ChEBI" id="CHEBI:57692"/>
    </ligand>
</feature>
<comment type="function">
    <text evidence="1">Conversion of NADPH, generated by peripheral catabolic pathways, to NADH, which can enter the respiratory chain for energy generation.</text>
</comment>
<comment type="catalytic activity">
    <reaction evidence="1">
        <text>NAD(+) + NADPH = NADH + NADP(+)</text>
        <dbReference type="Rhea" id="RHEA:11692"/>
        <dbReference type="ChEBI" id="CHEBI:57540"/>
        <dbReference type="ChEBI" id="CHEBI:57783"/>
        <dbReference type="ChEBI" id="CHEBI:57945"/>
        <dbReference type="ChEBI" id="CHEBI:58349"/>
        <dbReference type="EC" id="1.6.1.1"/>
    </reaction>
</comment>
<comment type="cofactor">
    <cofactor evidence="1">
        <name>FAD</name>
        <dbReference type="ChEBI" id="CHEBI:57692"/>
    </cofactor>
    <text evidence="1">Binds 1 FAD per subunit.</text>
</comment>
<comment type="subcellular location">
    <subcellularLocation>
        <location evidence="1">Cytoplasm</location>
    </subcellularLocation>
</comment>
<comment type="similarity">
    <text evidence="1">Belongs to the class-I pyridine nucleotide-disulfide oxidoreductase family.</text>
</comment>
<comment type="sequence caution" evidence="2">
    <conflict type="erroneous initiation">
        <sequence resource="EMBL-CDS" id="AAY36945"/>
    </conflict>
</comment>
<name>STHA_PSEU2</name>
<sequence>MAVYNYDVVVLGSGPAGEGAAMNAAKAGRKVAMVDSRRQVGGNCTHLGTIPSKALRHSVKQIIQFNTNPMFRAIGEPRWFSFPDVLKNAEMVISKQVASRTSYYARNRVDVFFGTGSFADETSINVVCTNGVVEKLVANQIIIATGSRPYRPADIDFSHKRIYDSDTILSLGHTPRKLIIYGAGVIGCEYASIFSGLGVLVELVDNRDQLLSFLDSEISQALSYHFSNNNVMVRHNEEYEKVEGLDNGVILHLKSGKKIKADALLWCNGRTGNTDKLGLENIGLKANGRGQIEVDETYRTSVSNVYGAGDVIGWPSLASAAYDQGRSAAGSMVDNGSWRYVNDVPTGIYTIPEISSIGKNEHELTQAKVPYEVGKAFFKGMARAQISGERVGMLKILFHRETLEVLGVHCFGDQASEIVHIGQAIMSQPGEANTMKYFVNTTFNYPTMAEAYRVAAYDGLNRLF</sequence>
<evidence type="ECO:0000255" key="1">
    <source>
        <dbReference type="HAMAP-Rule" id="MF_00247"/>
    </source>
</evidence>
<evidence type="ECO:0000305" key="2"/>
<accession>Q4ZV77</accession>
<dbReference type="EC" id="1.6.1.1" evidence="1"/>
<dbReference type="EMBL" id="CP000075">
    <property type="protein sequence ID" value="AAY36945.1"/>
    <property type="status" value="ALT_INIT"/>
    <property type="molecule type" value="Genomic_DNA"/>
</dbReference>
<dbReference type="RefSeq" id="WP_003436620.1">
    <property type="nucleotide sequence ID" value="NC_007005.1"/>
</dbReference>
<dbReference type="RefSeq" id="YP_234983.1">
    <property type="nucleotide sequence ID" value="NC_007005.1"/>
</dbReference>
<dbReference type="SMR" id="Q4ZV77"/>
<dbReference type="STRING" id="205918.Psyr_1901"/>
<dbReference type="KEGG" id="psb:Psyr_1901"/>
<dbReference type="PATRIC" id="fig|205918.7.peg.1945"/>
<dbReference type="eggNOG" id="COG1249">
    <property type="taxonomic scope" value="Bacteria"/>
</dbReference>
<dbReference type="HOGENOM" id="CLU_016755_0_0_6"/>
<dbReference type="OrthoDB" id="9800167at2"/>
<dbReference type="Proteomes" id="UP000000426">
    <property type="component" value="Chromosome"/>
</dbReference>
<dbReference type="GO" id="GO:0005829">
    <property type="term" value="C:cytosol"/>
    <property type="evidence" value="ECO:0007669"/>
    <property type="project" value="TreeGrafter"/>
</dbReference>
<dbReference type="GO" id="GO:0004148">
    <property type="term" value="F:dihydrolipoyl dehydrogenase (NADH) activity"/>
    <property type="evidence" value="ECO:0007669"/>
    <property type="project" value="TreeGrafter"/>
</dbReference>
<dbReference type="GO" id="GO:0050660">
    <property type="term" value="F:flavin adenine dinucleotide binding"/>
    <property type="evidence" value="ECO:0007669"/>
    <property type="project" value="TreeGrafter"/>
</dbReference>
<dbReference type="GO" id="GO:0003957">
    <property type="term" value="F:NAD(P)+ transhydrogenase (Si-specific) activity"/>
    <property type="evidence" value="ECO:0007669"/>
    <property type="project" value="UniProtKB-UniRule"/>
</dbReference>
<dbReference type="GO" id="GO:0006103">
    <property type="term" value="P:2-oxoglutarate metabolic process"/>
    <property type="evidence" value="ECO:0007669"/>
    <property type="project" value="TreeGrafter"/>
</dbReference>
<dbReference type="GO" id="GO:0006739">
    <property type="term" value="P:NADP metabolic process"/>
    <property type="evidence" value="ECO:0007669"/>
    <property type="project" value="UniProtKB-UniRule"/>
</dbReference>
<dbReference type="FunFam" id="3.30.390.30:FF:000002">
    <property type="entry name" value="Soluble pyridine nucleotide transhydrogenase"/>
    <property type="match status" value="1"/>
</dbReference>
<dbReference type="FunFam" id="3.50.50.60:FF:000008">
    <property type="entry name" value="Soluble pyridine nucleotide transhydrogenase"/>
    <property type="match status" value="1"/>
</dbReference>
<dbReference type="Gene3D" id="3.30.390.30">
    <property type="match status" value="1"/>
</dbReference>
<dbReference type="Gene3D" id="3.50.50.60">
    <property type="entry name" value="FAD/NAD(P)-binding domain"/>
    <property type="match status" value="2"/>
</dbReference>
<dbReference type="HAMAP" id="MF_00247">
    <property type="entry name" value="SthA"/>
    <property type="match status" value="1"/>
</dbReference>
<dbReference type="InterPro" id="IPR050151">
    <property type="entry name" value="Class-I_Pyr_Nuc-Dis_Oxidored"/>
</dbReference>
<dbReference type="InterPro" id="IPR036188">
    <property type="entry name" value="FAD/NAD-bd_sf"/>
</dbReference>
<dbReference type="InterPro" id="IPR023753">
    <property type="entry name" value="FAD/NAD-binding_dom"/>
</dbReference>
<dbReference type="InterPro" id="IPR016156">
    <property type="entry name" value="FAD/NAD-linked_Rdtase_dimer_sf"/>
</dbReference>
<dbReference type="InterPro" id="IPR001100">
    <property type="entry name" value="Pyr_nuc-diS_OxRdtase"/>
</dbReference>
<dbReference type="InterPro" id="IPR004099">
    <property type="entry name" value="Pyr_nucl-diS_OxRdtase_dimer"/>
</dbReference>
<dbReference type="InterPro" id="IPR022962">
    <property type="entry name" value="STH_gammaproteobact"/>
</dbReference>
<dbReference type="NCBIfam" id="NF003585">
    <property type="entry name" value="PRK05249.1"/>
    <property type="match status" value="1"/>
</dbReference>
<dbReference type="PANTHER" id="PTHR22912">
    <property type="entry name" value="DISULFIDE OXIDOREDUCTASE"/>
    <property type="match status" value="1"/>
</dbReference>
<dbReference type="PANTHER" id="PTHR22912:SF93">
    <property type="entry name" value="SOLUBLE PYRIDINE NUCLEOTIDE TRANSHYDROGENASE"/>
    <property type="match status" value="1"/>
</dbReference>
<dbReference type="Pfam" id="PF07992">
    <property type="entry name" value="Pyr_redox_2"/>
    <property type="match status" value="1"/>
</dbReference>
<dbReference type="Pfam" id="PF02852">
    <property type="entry name" value="Pyr_redox_dim"/>
    <property type="match status" value="1"/>
</dbReference>
<dbReference type="PIRSF" id="PIRSF000350">
    <property type="entry name" value="Mercury_reductase_MerA"/>
    <property type="match status" value="1"/>
</dbReference>
<dbReference type="PRINTS" id="PR00368">
    <property type="entry name" value="FADPNR"/>
</dbReference>
<dbReference type="PRINTS" id="PR00411">
    <property type="entry name" value="PNDRDTASEI"/>
</dbReference>
<dbReference type="SUPFAM" id="SSF51905">
    <property type="entry name" value="FAD/NAD(P)-binding domain"/>
    <property type="match status" value="1"/>
</dbReference>
<dbReference type="SUPFAM" id="SSF55424">
    <property type="entry name" value="FAD/NAD-linked reductases, dimerisation (C-terminal) domain"/>
    <property type="match status" value="1"/>
</dbReference>